<evidence type="ECO:0000250" key="1"/>
<evidence type="ECO:0000255" key="2">
    <source>
        <dbReference type="PROSITE-ProRule" id="PRU00116"/>
    </source>
</evidence>
<comment type="subcellular location">
    <subcellularLocation>
        <location evidence="1">Cytoplasm</location>
    </subcellularLocation>
</comment>
<dbReference type="EMBL" id="AB168664">
    <property type="protein sequence ID" value="BAE00775.1"/>
    <property type="molecule type" value="mRNA"/>
</dbReference>
<dbReference type="RefSeq" id="NP_001306526.1">
    <property type="nucleotide sequence ID" value="NM_001319597.1"/>
</dbReference>
<dbReference type="SMR" id="Q4R7Z7"/>
<dbReference type="STRING" id="9541.ENSMFAP00000015227"/>
<dbReference type="eggNOG" id="ENOG502QS0S">
    <property type="taxonomic scope" value="Eukaryota"/>
</dbReference>
<dbReference type="Proteomes" id="UP000233100">
    <property type="component" value="Unplaced"/>
</dbReference>
<dbReference type="GO" id="GO:0005737">
    <property type="term" value="C:cytoplasm"/>
    <property type="evidence" value="ECO:0007669"/>
    <property type="project" value="UniProtKB-SubCell"/>
</dbReference>
<dbReference type="GO" id="GO:0000922">
    <property type="term" value="C:spindle pole"/>
    <property type="evidence" value="ECO:0007669"/>
    <property type="project" value="TreeGrafter"/>
</dbReference>
<dbReference type="GO" id="GO:0005516">
    <property type="term" value="F:calmodulin binding"/>
    <property type="evidence" value="ECO:0007669"/>
    <property type="project" value="UniProtKB-KW"/>
</dbReference>
<dbReference type="GO" id="GO:0051295">
    <property type="term" value="P:establishment of meiotic spindle localization"/>
    <property type="evidence" value="ECO:0007669"/>
    <property type="project" value="TreeGrafter"/>
</dbReference>
<dbReference type="GO" id="GO:0000278">
    <property type="term" value="P:mitotic cell cycle"/>
    <property type="evidence" value="ECO:0007669"/>
    <property type="project" value="TreeGrafter"/>
</dbReference>
<dbReference type="GO" id="GO:0007051">
    <property type="term" value="P:spindle organization"/>
    <property type="evidence" value="ECO:0007669"/>
    <property type="project" value="TreeGrafter"/>
</dbReference>
<dbReference type="Gene3D" id="1.20.5.190">
    <property type="match status" value="2"/>
</dbReference>
<dbReference type="InterPro" id="IPR051185">
    <property type="entry name" value="ASPM"/>
</dbReference>
<dbReference type="InterPro" id="IPR000048">
    <property type="entry name" value="IQ_motif_EF-hand-BS"/>
</dbReference>
<dbReference type="InterPro" id="IPR027417">
    <property type="entry name" value="P-loop_NTPase"/>
</dbReference>
<dbReference type="PANTHER" id="PTHR22706">
    <property type="entry name" value="ASSEMBLY FACTOR FOR SPINDLE MICROTUBULES"/>
    <property type="match status" value="1"/>
</dbReference>
<dbReference type="PANTHER" id="PTHR22706:SF1">
    <property type="entry name" value="ASSEMBLY FACTOR FOR SPINDLE MICROTUBULES"/>
    <property type="match status" value="1"/>
</dbReference>
<dbReference type="Pfam" id="PF00612">
    <property type="entry name" value="IQ"/>
    <property type="match status" value="2"/>
</dbReference>
<dbReference type="SMART" id="SM00015">
    <property type="entry name" value="IQ"/>
    <property type="match status" value="3"/>
</dbReference>
<dbReference type="SUPFAM" id="SSF52540">
    <property type="entry name" value="P-loop containing nucleoside triphosphate hydrolases"/>
    <property type="match status" value="1"/>
</dbReference>
<dbReference type="PROSITE" id="PS50096">
    <property type="entry name" value="IQ"/>
    <property type="match status" value="2"/>
</dbReference>
<name>SPT17_MACFA</name>
<proteinExistence type="evidence at transcript level"/>
<organism>
    <name type="scientific">Macaca fascicularis</name>
    <name type="common">Crab-eating macaque</name>
    <name type="synonym">Cynomolgus monkey</name>
    <dbReference type="NCBI Taxonomy" id="9541"/>
    <lineage>
        <taxon>Eukaryota</taxon>
        <taxon>Metazoa</taxon>
        <taxon>Chordata</taxon>
        <taxon>Craniata</taxon>
        <taxon>Vertebrata</taxon>
        <taxon>Euteleostomi</taxon>
        <taxon>Mammalia</taxon>
        <taxon>Eutheria</taxon>
        <taxon>Euarchontoglires</taxon>
        <taxon>Primates</taxon>
        <taxon>Haplorrhini</taxon>
        <taxon>Catarrhini</taxon>
        <taxon>Cercopithecidae</taxon>
        <taxon>Cercopithecinae</taxon>
        <taxon>Macaca</taxon>
    </lineage>
</organism>
<accession>Q4R7Z7</accession>
<feature type="chain" id="PRO_0000265934" description="Spermatogenesis-associated protein 17">
    <location>
        <begin position="1"/>
        <end position="361"/>
    </location>
</feature>
<feature type="domain" description="IQ 1" evidence="2">
    <location>
        <begin position="32"/>
        <end position="61"/>
    </location>
</feature>
<feature type="domain" description="IQ 2" evidence="2">
    <location>
        <begin position="55"/>
        <end position="84"/>
    </location>
</feature>
<feature type="domain" description="IQ 3" evidence="2">
    <location>
        <begin position="91"/>
        <end position="120"/>
    </location>
</feature>
<keyword id="KW-0112">Calmodulin-binding</keyword>
<keyword id="KW-0963">Cytoplasm</keyword>
<keyword id="KW-1185">Reference proteome</keyword>
<keyword id="KW-0677">Repeat</keyword>
<reference key="1">
    <citation type="submission" date="2005-06" db="EMBL/GenBank/DDBJ databases">
        <title>DNA sequences of macaque genes expressed in brain or testis and its evolutionary implications.</title>
        <authorList>
            <consortium name="International consortium for macaque cDNA sequencing and analysis"/>
        </authorList>
    </citation>
    <scope>NUCLEOTIDE SEQUENCE [LARGE SCALE MRNA]</scope>
    <source>
        <tissue>Testis</tissue>
    </source>
</reference>
<protein>
    <recommendedName>
        <fullName>Spermatogenesis-associated protein 17</fullName>
    </recommendedName>
</protein>
<sequence>MATLARLQARSSTVGNQYYFRNSVVDPFRIKENDAAVKIQSWFRGCQVRAYVRHLNRIVTIIQKWWRSFLGRKQYQLTVQVAYYTMMMNLYNAMAVRKQRRWRGYRVRKYLFNYYYLKEYLRVVSETNDAIRKALEEFAEMKEREEKKANLEREEKKRDYQARKMHYLLSTKQIPGIYNSPFRKEPDPWELQLQKAKPLTHRRPKVKQKDSTSLNDWLACTSARSFPRSEILPPINRKQCQGPFRDITEVLEQRYKPLEPTLWVAEPIDELKLAREELRREEWLRNVNDNMFLPFSSYHKNEKYIPSMHLSSKYCPISHKEQFRSENPKKWICDKDFQTVLPSFELFSKYGKLYSKAGQIV</sequence>
<gene>
    <name type="primary">SPATA17</name>
    <name type="ORF">QtsA-13974</name>
</gene>